<sequence>MIQIKLHNTKTRRREPFAPADPAHVKLYVCGPTVYDRAHLGNARTVVVFDTLVRLLRHLFPRVTYVRNITDIDDKINARAAETGETIGEITARTTSWFHEDMAALYCAPPDIEPRATGHIGDIIALIERLIARGHAYAAEGHVLFAVATDAEYGKFSGRSPEELLAGARVDVATYKRDPGDFVLWKPSPPDLPGWDSPWGRGRPGWHIECSAMIHATLGETIDIHGGGADLIFPHHENEIAQSCCAFPGSEFARVWVHAGMLQVDGQKMSKSLGNFRTVQDVLGEAPGEAVRFLLLKTHYRGVLDFSTAALAEAKRELDRFYRALEKHADPAPAATPPAAFIEALADDLNTPGAIAELHALADAAMQGDAASAAGLRAAGMLIGIFNHTADQWFRGEATDDARIDALIAERLAARRNKDFARADAIRAELAAAGILLEDGPGGTTWRRA</sequence>
<protein>
    <recommendedName>
        <fullName evidence="1">Cysteine--tRNA ligase</fullName>
        <ecNumber evidence="1">6.1.1.16</ecNumber>
    </recommendedName>
    <alternativeName>
        <fullName evidence="1">Cysteinyl-tRNA synthetase</fullName>
        <shortName evidence="1">CysRS</shortName>
    </alternativeName>
</protein>
<dbReference type="EC" id="6.1.1.16" evidence="1"/>
<dbReference type="EMBL" id="CP000697">
    <property type="protein sequence ID" value="ABQ30614.1"/>
    <property type="molecule type" value="Genomic_DNA"/>
</dbReference>
<dbReference type="RefSeq" id="WP_011942217.1">
    <property type="nucleotide sequence ID" value="NC_009484.1"/>
</dbReference>
<dbReference type="SMR" id="A5FYD2"/>
<dbReference type="STRING" id="349163.Acry_1404"/>
<dbReference type="KEGG" id="acr:Acry_1404"/>
<dbReference type="eggNOG" id="COG0215">
    <property type="taxonomic scope" value="Bacteria"/>
</dbReference>
<dbReference type="HOGENOM" id="CLU_013528_0_1_5"/>
<dbReference type="Proteomes" id="UP000000245">
    <property type="component" value="Chromosome"/>
</dbReference>
<dbReference type="GO" id="GO:0005829">
    <property type="term" value="C:cytosol"/>
    <property type="evidence" value="ECO:0007669"/>
    <property type="project" value="TreeGrafter"/>
</dbReference>
<dbReference type="GO" id="GO:0005524">
    <property type="term" value="F:ATP binding"/>
    <property type="evidence" value="ECO:0007669"/>
    <property type="project" value="UniProtKB-UniRule"/>
</dbReference>
<dbReference type="GO" id="GO:0004817">
    <property type="term" value="F:cysteine-tRNA ligase activity"/>
    <property type="evidence" value="ECO:0007669"/>
    <property type="project" value="UniProtKB-UniRule"/>
</dbReference>
<dbReference type="GO" id="GO:0008270">
    <property type="term" value="F:zinc ion binding"/>
    <property type="evidence" value="ECO:0007669"/>
    <property type="project" value="UniProtKB-UniRule"/>
</dbReference>
<dbReference type="GO" id="GO:0006423">
    <property type="term" value="P:cysteinyl-tRNA aminoacylation"/>
    <property type="evidence" value="ECO:0007669"/>
    <property type="project" value="UniProtKB-UniRule"/>
</dbReference>
<dbReference type="CDD" id="cd00672">
    <property type="entry name" value="CysRS_core"/>
    <property type="match status" value="1"/>
</dbReference>
<dbReference type="FunFam" id="3.40.50.620:FF:000068">
    <property type="entry name" value="Cysteine--tRNA ligase"/>
    <property type="match status" value="1"/>
</dbReference>
<dbReference type="Gene3D" id="1.20.120.1910">
    <property type="entry name" value="Cysteine-tRNA ligase, C-terminal anti-codon recognition domain"/>
    <property type="match status" value="1"/>
</dbReference>
<dbReference type="Gene3D" id="3.40.50.620">
    <property type="entry name" value="HUPs"/>
    <property type="match status" value="1"/>
</dbReference>
<dbReference type="HAMAP" id="MF_00041">
    <property type="entry name" value="Cys_tRNA_synth"/>
    <property type="match status" value="1"/>
</dbReference>
<dbReference type="InterPro" id="IPR015803">
    <property type="entry name" value="Cys-tRNA-ligase"/>
</dbReference>
<dbReference type="InterPro" id="IPR015273">
    <property type="entry name" value="Cys-tRNA-synt_Ia_DALR"/>
</dbReference>
<dbReference type="InterPro" id="IPR024909">
    <property type="entry name" value="Cys-tRNA/MSH_ligase"/>
</dbReference>
<dbReference type="InterPro" id="IPR056411">
    <property type="entry name" value="CysS_C"/>
</dbReference>
<dbReference type="InterPro" id="IPR014729">
    <property type="entry name" value="Rossmann-like_a/b/a_fold"/>
</dbReference>
<dbReference type="InterPro" id="IPR032678">
    <property type="entry name" value="tRNA-synt_1_cat_dom"/>
</dbReference>
<dbReference type="InterPro" id="IPR009080">
    <property type="entry name" value="tRNAsynth_Ia_anticodon-bd"/>
</dbReference>
<dbReference type="NCBIfam" id="TIGR00435">
    <property type="entry name" value="cysS"/>
    <property type="match status" value="1"/>
</dbReference>
<dbReference type="PANTHER" id="PTHR10890:SF3">
    <property type="entry name" value="CYSTEINE--TRNA LIGASE, CYTOPLASMIC"/>
    <property type="match status" value="1"/>
</dbReference>
<dbReference type="PANTHER" id="PTHR10890">
    <property type="entry name" value="CYSTEINYL-TRNA SYNTHETASE"/>
    <property type="match status" value="1"/>
</dbReference>
<dbReference type="Pfam" id="PF23493">
    <property type="entry name" value="CysS_C"/>
    <property type="match status" value="1"/>
</dbReference>
<dbReference type="Pfam" id="PF09190">
    <property type="entry name" value="DALR_2"/>
    <property type="match status" value="1"/>
</dbReference>
<dbReference type="Pfam" id="PF01406">
    <property type="entry name" value="tRNA-synt_1e"/>
    <property type="match status" value="1"/>
</dbReference>
<dbReference type="PRINTS" id="PR00983">
    <property type="entry name" value="TRNASYNTHCYS"/>
</dbReference>
<dbReference type="SMART" id="SM00840">
    <property type="entry name" value="DALR_2"/>
    <property type="match status" value="1"/>
</dbReference>
<dbReference type="SUPFAM" id="SSF47323">
    <property type="entry name" value="Anticodon-binding domain of a subclass of class I aminoacyl-tRNA synthetases"/>
    <property type="match status" value="1"/>
</dbReference>
<dbReference type="SUPFAM" id="SSF52374">
    <property type="entry name" value="Nucleotidylyl transferase"/>
    <property type="match status" value="1"/>
</dbReference>
<reference key="1">
    <citation type="submission" date="2007-05" db="EMBL/GenBank/DDBJ databases">
        <title>Complete sequence of chromosome of Acidiphilium cryptum JF-5.</title>
        <authorList>
            <consortium name="US DOE Joint Genome Institute"/>
            <person name="Copeland A."/>
            <person name="Lucas S."/>
            <person name="Lapidus A."/>
            <person name="Barry K."/>
            <person name="Detter J.C."/>
            <person name="Glavina del Rio T."/>
            <person name="Hammon N."/>
            <person name="Israni S."/>
            <person name="Dalin E."/>
            <person name="Tice H."/>
            <person name="Pitluck S."/>
            <person name="Sims D."/>
            <person name="Brettin T."/>
            <person name="Bruce D."/>
            <person name="Han C."/>
            <person name="Schmutz J."/>
            <person name="Larimer F."/>
            <person name="Land M."/>
            <person name="Hauser L."/>
            <person name="Kyrpides N."/>
            <person name="Kim E."/>
            <person name="Magnuson T."/>
            <person name="Richardson P."/>
        </authorList>
    </citation>
    <scope>NUCLEOTIDE SEQUENCE [LARGE SCALE GENOMIC DNA]</scope>
    <source>
        <strain>JF-5</strain>
    </source>
</reference>
<comment type="catalytic activity">
    <reaction evidence="1">
        <text>tRNA(Cys) + L-cysteine + ATP = L-cysteinyl-tRNA(Cys) + AMP + diphosphate</text>
        <dbReference type="Rhea" id="RHEA:17773"/>
        <dbReference type="Rhea" id="RHEA-COMP:9661"/>
        <dbReference type="Rhea" id="RHEA-COMP:9679"/>
        <dbReference type="ChEBI" id="CHEBI:30616"/>
        <dbReference type="ChEBI" id="CHEBI:33019"/>
        <dbReference type="ChEBI" id="CHEBI:35235"/>
        <dbReference type="ChEBI" id="CHEBI:78442"/>
        <dbReference type="ChEBI" id="CHEBI:78517"/>
        <dbReference type="ChEBI" id="CHEBI:456215"/>
        <dbReference type="EC" id="6.1.1.16"/>
    </reaction>
</comment>
<comment type="cofactor">
    <cofactor evidence="1">
        <name>Zn(2+)</name>
        <dbReference type="ChEBI" id="CHEBI:29105"/>
    </cofactor>
    <text evidence="1">Binds 1 zinc ion per subunit.</text>
</comment>
<comment type="subunit">
    <text evidence="1">Monomer.</text>
</comment>
<comment type="subcellular location">
    <subcellularLocation>
        <location evidence="1">Cytoplasm</location>
    </subcellularLocation>
</comment>
<comment type="similarity">
    <text evidence="1">Belongs to the class-I aminoacyl-tRNA synthetase family.</text>
</comment>
<gene>
    <name evidence="1" type="primary">cysS</name>
    <name type="ordered locus">Acry_1404</name>
</gene>
<accession>A5FYD2</accession>
<evidence type="ECO:0000255" key="1">
    <source>
        <dbReference type="HAMAP-Rule" id="MF_00041"/>
    </source>
</evidence>
<name>SYC_ACICJ</name>
<feature type="chain" id="PRO_0000332777" description="Cysteine--tRNA ligase">
    <location>
        <begin position="1"/>
        <end position="449"/>
    </location>
</feature>
<feature type="short sequence motif" description="'HIGH' region">
    <location>
        <begin position="32"/>
        <end position="42"/>
    </location>
</feature>
<feature type="short sequence motif" description="'KMSKS' region">
    <location>
        <begin position="268"/>
        <end position="272"/>
    </location>
</feature>
<feature type="binding site" evidence="1">
    <location>
        <position position="30"/>
    </location>
    <ligand>
        <name>Zn(2+)</name>
        <dbReference type="ChEBI" id="CHEBI:29105"/>
    </ligand>
</feature>
<feature type="binding site" evidence="1">
    <location>
        <position position="210"/>
    </location>
    <ligand>
        <name>Zn(2+)</name>
        <dbReference type="ChEBI" id="CHEBI:29105"/>
    </ligand>
</feature>
<feature type="binding site" evidence="1">
    <location>
        <position position="235"/>
    </location>
    <ligand>
        <name>Zn(2+)</name>
        <dbReference type="ChEBI" id="CHEBI:29105"/>
    </ligand>
</feature>
<feature type="binding site" evidence="1">
    <location>
        <position position="239"/>
    </location>
    <ligand>
        <name>Zn(2+)</name>
        <dbReference type="ChEBI" id="CHEBI:29105"/>
    </ligand>
</feature>
<feature type="binding site" evidence="1">
    <location>
        <position position="271"/>
    </location>
    <ligand>
        <name>ATP</name>
        <dbReference type="ChEBI" id="CHEBI:30616"/>
    </ligand>
</feature>
<keyword id="KW-0030">Aminoacyl-tRNA synthetase</keyword>
<keyword id="KW-0067">ATP-binding</keyword>
<keyword id="KW-0963">Cytoplasm</keyword>
<keyword id="KW-0436">Ligase</keyword>
<keyword id="KW-0479">Metal-binding</keyword>
<keyword id="KW-0547">Nucleotide-binding</keyword>
<keyword id="KW-0648">Protein biosynthesis</keyword>
<keyword id="KW-1185">Reference proteome</keyword>
<keyword id="KW-0862">Zinc</keyword>
<proteinExistence type="inferred from homology"/>
<organism>
    <name type="scientific">Acidiphilium cryptum (strain JF-5)</name>
    <dbReference type="NCBI Taxonomy" id="349163"/>
    <lineage>
        <taxon>Bacteria</taxon>
        <taxon>Pseudomonadati</taxon>
        <taxon>Pseudomonadota</taxon>
        <taxon>Alphaproteobacteria</taxon>
        <taxon>Acetobacterales</taxon>
        <taxon>Acidocellaceae</taxon>
        <taxon>Acidiphilium</taxon>
    </lineage>
</organism>